<name>OPS_ARATH</name>
<organism>
    <name type="scientific">Arabidopsis thaliana</name>
    <name type="common">Mouse-ear cress</name>
    <dbReference type="NCBI Taxonomy" id="3702"/>
    <lineage>
        <taxon>Eukaryota</taxon>
        <taxon>Viridiplantae</taxon>
        <taxon>Streptophyta</taxon>
        <taxon>Embryophyta</taxon>
        <taxon>Tracheophyta</taxon>
        <taxon>Spermatophyta</taxon>
        <taxon>Magnoliopsida</taxon>
        <taxon>eudicotyledons</taxon>
        <taxon>Gunneridae</taxon>
        <taxon>Pentapetalae</taxon>
        <taxon>rosids</taxon>
        <taxon>malvids</taxon>
        <taxon>Brassicales</taxon>
        <taxon>Brassicaceae</taxon>
        <taxon>Camelineae</taxon>
        <taxon>Arabidopsis</taxon>
    </lineage>
</organism>
<dbReference type="EMBL" id="AC009326">
    <property type="protein sequence ID" value="AAD56323.1"/>
    <property type="molecule type" value="Genomic_DNA"/>
</dbReference>
<dbReference type="EMBL" id="CP002686">
    <property type="protein sequence ID" value="AEE74716.1"/>
    <property type="molecule type" value="Genomic_DNA"/>
</dbReference>
<dbReference type="EMBL" id="AK226807">
    <property type="protein sequence ID" value="BAE98903.1"/>
    <property type="molecule type" value="mRNA"/>
</dbReference>
<dbReference type="RefSeq" id="NP_187519.1">
    <property type="nucleotide sequence ID" value="NM_111741.3"/>
</dbReference>
<dbReference type="BioGRID" id="5394">
    <property type="interactions" value="3"/>
</dbReference>
<dbReference type="FunCoup" id="Q9SS80">
    <property type="interactions" value="90"/>
</dbReference>
<dbReference type="STRING" id="3702.Q9SS80"/>
<dbReference type="GlyGen" id="Q9SS80">
    <property type="glycosylation" value="1 site"/>
</dbReference>
<dbReference type="iPTMnet" id="Q9SS80"/>
<dbReference type="PaxDb" id="3702-AT3G09070.1"/>
<dbReference type="ProteomicsDB" id="248816"/>
<dbReference type="EnsemblPlants" id="AT3G09070.1">
    <property type="protein sequence ID" value="AT3G09070.1"/>
    <property type="gene ID" value="AT3G09070"/>
</dbReference>
<dbReference type="GeneID" id="820060"/>
<dbReference type="Gramene" id="AT3G09070.1">
    <property type="protein sequence ID" value="AT3G09070.1"/>
    <property type="gene ID" value="AT3G09070"/>
</dbReference>
<dbReference type="KEGG" id="ath:AT3G09070"/>
<dbReference type="Araport" id="AT3G09070"/>
<dbReference type="TAIR" id="AT3G09070">
    <property type="gene designation" value="OPS"/>
</dbReference>
<dbReference type="eggNOG" id="ENOG502QR95">
    <property type="taxonomic scope" value="Eukaryota"/>
</dbReference>
<dbReference type="HOGENOM" id="CLU_021226_0_0_1"/>
<dbReference type="InParanoid" id="Q9SS80"/>
<dbReference type="OMA" id="KPMKDYI"/>
<dbReference type="PhylomeDB" id="Q9SS80"/>
<dbReference type="PRO" id="PR:Q9SS80"/>
<dbReference type="Proteomes" id="UP000006548">
    <property type="component" value="Chromosome 3"/>
</dbReference>
<dbReference type="ExpressionAtlas" id="Q9SS80">
    <property type="expression patterns" value="baseline and differential"/>
</dbReference>
<dbReference type="GO" id="GO:0016324">
    <property type="term" value="C:apical plasma membrane"/>
    <property type="evidence" value="ECO:0000314"/>
    <property type="project" value="UniProtKB"/>
</dbReference>
<dbReference type="GO" id="GO:0009507">
    <property type="term" value="C:chloroplast"/>
    <property type="evidence" value="ECO:0007005"/>
    <property type="project" value="TAIR"/>
</dbReference>
<dbReference type="GO" id="GO:0005737">
    <property type="term" value="C:cytoplasm"/>
    <property type="evidence" value="ECO:0000314"/>
    <property type="project" value="UniProtKB"/>
</dbReference>
<dbReference type="GO" id="GO:0030154">
    <property type="term" value="P:cell differentiation"/>
    <property type="evidence" value="ECO:0007669"/>
    <property type="project" value="UniProtKB-KW"/>
</dbReference>
<dbReference type="GO" id="GO:0010588">
    <property type="term" value="P:cotyledon vascular tissue pattern formation"/>
    <property type="evidence" value="ECO:0000315"/>
    <property type="project" value="TAIR"/>
</dbReference>
<dbReference type="GO" id="GO:0010088">
    <property type="term" value="P:phloem development"/>
    <property type="evidence" value="ECO:0000315"/>
    <property type="project" value="UniProtKB"/>
</dbReference>
<dbReference type="GO" id="GO:0010233">
    <property type="term" value="P:phloem transport"/>
    <property type="evidence" value="ECO:0000315"/>
    <property type="project" value="TAIR"/>
</dbReference>
<dbReference type="GO" id="GO:2000280">
    <property type="term" value="P:regulation of root development"/>
    <property type="evidence" value="ECO:0000315"/>
    <property type="project" value="UniProtKB"/>
</dbReference>
<dbReference type="GO" id="GO:0022622">
    <property type="term" value="P:root system development"/>
    <property type="evidence" value="ECO:0000315"/>
    <property type="project" value="TAIR"/>
</dbReference>
<dbReference type="InterPro" id="IPR008004">
    <property type="entry name" value="OCTOPUS-like"/>
</dbReference>
<dbReference type="PANTHER" id="PTHR31659:SF38">
    <property type="entry name" value="PROTEIN OCTOPUS"/>
    <property type="match status" value="1"/>
</dbReference>
<dbReference type="PANTHER" id="PTHR31659">
    <property type="entry name" value="PROTEIN: UPF0503-LIKE PROTEIN, PUTATIVE (DUF740)-RELATED"/>
    <property type="match status" value="1"/>
</dbReference>
<dbReference type="Pfam" id="PF05340">
    <property type="entry name" value="DUF740"/>
    <property type="match status" value="2"/>
</dbReference>
<comment type="function">
    <text evidence="3 4 5 6">Potentiates primary root protophloem differentiation (PubMed:22395740, PubMed:25049386, PubMed:28652362). Required, together with VCC, for embryo provasculature development and cotyledon vascular complexity and connectivity (PubMed:25149602). Regulates roots architecture (PubMed:25049386). Mediates the recruitment of ASK7/BIN2 to the plasma membrane (PubMed:28652362).</text>
</comment>
<comment type="subunit">
    <text evidence="5">Interacts with VCC.</text>
</comment>
<comment type="subcellular location">
    <subcellularLocation>
        <location evidence="3 6">Cell membrane</location>
        <topology evidence="8">Peripheral membrane protein</topology>
        <orientation evidence="8">Cytoplasmic side</orientation>
    </subcellularLocation>
    <subcellularLocation>
        <location evidence="6">Cytoplasm</location>
    </subcellularLocation>
    <text evidence="3 6">Polar localization at the apical side of the plasma membrane, shootward oriented, in developing root protophloem cells (PubMed:22395740, PubMed:28652362). Also found in the cytoplasm in the early, dividing. protophloem cells (PubMed:28652362).</text>
</comment>
<comment type="tissue specificity">
    <text evidence="3 4">Expressed in provascular cells and phloem initials (e.g. protophloem, metaphloem, sieve element precursor cells and sieve element procambium precursor cells).</text>
</comment>
<comment type="developmental stage">
    <text evidence="3">First expressed in provascular cells, and upon vascular cell type specification becomes restricted to the phloem cell lineage.</text>
</comment>
<comment type="PTM">
    <text evidence="6">Phosphorylation at Ser-318 amplifies the promotion of protophloem differentiation.</text>
</comment>
<comment type="disruption phenotype">
    <text evidence="3 4 5 6">Short roots associated with both reduced cell division in the root meristem and altered root cell elongation. Early emergence of lateral roots at the root-hypocotyl junction (PubMed:22395740, PubMed:25049386, PubMed:28652362). Reductions in the complexity of vascular networks in cotyledons and discontinuous phloem differentiation (PubMed:22395740, PubMed:25049386, PubMed:25149602, PubMed:28652362). Impaired primary root protophloem differentiation during root development leading to altered phloem long-distance transport (PubMed:22395740). The double mutant vcc ops exhibits a complete loss of high-complexity vascular networks (PubMed:25149602). The double mutant brx ops double mutant has strongly reduced root length and meristem size, with missing protophloem strands (PubMed:28652362).</text>
</comment>
<comment type="similarity">
    <text evidence="8">Belongs to the OCTOPUS family.</text>
</comment>
<feature type="chain" id="PRO_0000311122" description="Protein OCTOPUS">
    <location>
        <begin position="1"/>
        <end position="685"/>
    </location>
</feature>
<feature type="region of interest" description="Disordered" evidence="2">
    <location>
        <begin position="1"/>
        <end position="34"/>
    </location>
</feature>
<feature type="region of interest" description="Disordered" evidence="2">
    <location>
        <begin position="152"/>
        <end position="202"/>
    </location>
</feature>
<feature type="region of interest" description="Disordered" evidence="2">
    <location>
        <begin position="280"/>
        <end position="314"/>
    </location>
</feature>
<feature type="region of interest" description="Disordered" evidence="2">
    <location>
        <begin position="419"/>
        <end position="471"/>
    </location>
</feature>
<feature type="region of interest" description="Disordered" evidence="2">
    <location>
        <begin position="584"/>
        <end position="640"/>
    </location>
</feature>
<feature type="coiled-coil region" evidence="1">
    <location>
        <begin position="549"/>
        <end position="578"/>
    </location>
</feature>
<feature type="compositionally biased region" description="Acidic residues" evidence="2">
    <location>
        <begin position="179"/>
        <end position="202"/>
    </location>
</feature>
<feature type="compositionally biased region" description="Basic residues" evidence="2">
    <location>
        <begin position="280"/>
        <end position="291"/>
    </location>
</feature>
<feature type="compositionally biased region" description="Basic and acidic residues" evidence="2">
    <location>
        <begin position="292"/>
        <end position="314"/>
    </location>
</feature>
<feature type="compositionally biased region" description="Low complexity" evidence="2">
    <location>
        <begin position="601"/>
        <end position="611"/>
    </location>
</feature>
<feature type="modified residue" description="Phosphoserine" evidence="6">
    <location>
        <position position="318"/>
    </location>
</feature>
<feature type="mutagenesis site" description="Reduced activity. Normal plasma membrane localization. Complements the ops mutant." evidence="6">
    <original>S</original>
    <variation>A</variation>
    <location>
        <position position="318"/>
    </location>
</feature>
<feature type="mutagenesis site" description="Slightly reduced activity. Normal plasma membrane localization. Complements the ops mutant." evidence="6">
    <original>S</original>
    <variation>E</variation>
    <location>
        <position position="318"/>
    </location>
</feature>
<feature type="mutagenesis site" description="Slightly increased activity. Normal plasma membrane localization. Complements the ops and brx mutants. Strongly increased activity; when associated with K-319." evidence="6">
    <original>S</original>
    <variation>K</variation>
    <location>
        <position position="318"/>
    </location>
</feature>
<feature type="mutagenesis site" description="Gain-of-function allele that partially rescues roots defects phenotype associated with the lack of BRX. Normal plasma membrane localization. Complements the ops and brx mutants. Strongly increased activity; when associated with K-318." evidence="4 6">
    <original>E</original>
    <variation>K</variation>
    <location>
        <position position="319"/>
    </location>
</feature>
<feature type="mutagenesis site" description="Slightly increased activity. Normal plasma membrane localization. Complements the ops and brx mutants." evidence="6">
    <original>E</original>
    <variation>R</variation>
    <location>
        <position position="319"/>
    </location>
</feature>
<evidence type="ECO:0000255" key="1"/>
<evidence type="ECO:0000256" key="2">
    <source>
        <dbReference type="SAM" id="MobiDB-lite"/>
    </source>
</evidence>
<evidence type="ECO:0000269" key="3">
    <source>
    </source>
</evidence>
<evidence type="ECO:0000269" key="4">
    <source>
    </source>
</evidence>
<evidence type="ECO:0000269" key="5">
    <source>
    </source>
</evidence>
<evidence type="ECO:0000269" key="6">
    <source>
    </source>
</evidence>
<evidence type="ECO:0000303" key="7">
    <source>
    </source>
</evidence>
<evidence type="ECO:0000305" key="8"/>
<evidence type="ECO:0000312" key="9">
    <source>
        <dbReference type="Araport" id="AT3G09070"/>
    </source>
</evidence>
<evidence type="ECO:0000312" key="10">
    <source>
        <dbReference type="EMBL" id="AAD56323.1"/>
    </source>
</evidence>
<sequence length="685" mass="75441">MNPATDPVSAAAAALAPPPQPPQPHRLSTSCNRHPEERFTGFCPSCLCERLSVLDQTNNGGSSSSSKKPPTISAAALKALFKPSGNNGVGGVNTNGNGRVKPGFFPELRRTKSFSASKNNEGFSGVFEPQRRSCDVRLRSSLWNLFSQDEQRNLPSNVTGGEIDVEPRKSSVAEPVLEVNDEGEAESDDEELEEEEEEDYVEAGDFEILNDSGELMREKSDEIVEVREEIEEAVKPTKGLSEEELKPIKDYIDLDSQTKKPSVRRSFWSAASVFSKKLQKWRQNQKMKKRRNGGDHRPGSARLPVEKPIGRQLRDTQSEIADYGYGRRSCDTDPRFSLDAGRFSLDAGRFSVDIGRISLDDPRYSFDEPRASWDGSLIGRTMFPPAARAPPPPSMLSVVEDAPPPVHRHVTRADMQFPVEEPAPPPPVVNQTNGVSDPVIIPGGSIQTRDYYTDSSSRRRKSLDRSSSSMRKTAAAVVADMDEPKLSVSSAISIDAYSGSLRDNNNYAVETADNGSFREPAMMIGDRKVNSNDNNKKSRRWGKWSILGLIYRKSVNKYEEEEEEEEDRYRRLNGGMVERSLSESWPELRNGGGGGGGPRMVRSNSNVSWRSSGGGSARKVNGLDRRNKSSRYSPKNGENGMLKFYLPHMKASRRMSGTGGAGGGGGGGWANSHGHSIARSVMRLY</sequence>
<accession>Q9SS80</accession>
<protein>
    <recommendedName>
        <fullName evidence="7">Protein OCTOPUS</fullName>
    </recommendedName>
</protein>
<reference key="1">
    <citation type="journal article" date="2000" name="Nature">
        <title>Sequence and analysis of chromosome 3 of the plant Arabidopsis thaliana.</title>
        <authorList>
            <person name="Salanoubat M."/>
            <person name="Lemcke K."/>
            <person name="Rieger M."/>
            <person name="Ansorge W."/>
            <person name="Unseld M."/>
            <person name="Fartmann B."/>
            <person name="Valle G."/>
            <person name="Bloecker H."/>
            <person name="Perez-Alonso M."/>
            <person name="Obermaier B."/>
            <person name="Delseny M."/>
            <person name="Boutry M."/>
            <person name="Grivell L.A."/>
            <person name="Mache R."/>
            <person name="Puigdomenech P."/>
            <person name="De Simone V."/>
            <person name="Choisne N."/>
            <person name="Artiguenave F."/>
            <person name="Robert C."/>
            <person name="Brottier P."/>
            <person name="Wincker P."/>
            <person name="Cattolico L."/>
            <person name="Weissenbach J."/>
            <person name="Saurin W."/>
            <person name="Quetier F."/>
            <person name="Schaefer M."/>
            <person name="Mueller-Auer S."/>
            <person name="Gabel C."/>
            <person name="Fuchs M."/>
            <person name="Benes V."/>
            <person name="Wurmbach E."/>
            <person name="Drzonek H."/>
            <person name="Erfle H."/>
            <person name="Jordan N."/>
            <person name="Bangert S."/>
            <person name="Wiedelmann R."/>
            <person name="Kranz H."/>
            <person name="Voss H."/>
            <person name="Holland R."/>
            <person name="Brandt P."/>
            <person name="Nyakatura G."/>
            <person name="Vezzi A."/>
            <person name="D'Angelo M."/>
            <person name="Pallavicini A."/>
            <person name="Toppo S."/>
            <person name="Simionati B."/>
            <person name="Conrad A."/>
            <person name="Hornischer K."/>
            <person name="Kauer G."/>
            <person name="Loehnert T.-H."/>
            <person name="Nordsiek G."/>
            <person name="Reichelt J."/>
            <person name="Scharfe M."/>
            <person name="Schoen O."/>
            <person name="Bargues M."/>
            <person name="Terol J."/>
            <person name="Climent J."/>
            <person name="Navarro P."/>
            <person name="Collado C."/>
            <person name="Perez-Perez A."/>
            <person name="Ottenwaelder B."/>
            <person name="Duchemin D."/>
            <person name="Cooke R."/>
            <person name="Laudie M."/>
            <person name="Berger-Llauro C."/>
            <person name="Purnelle B."/>
            <person name="Masuy D."/>
            <person name="de Haan M."/>
            <person name="Maarse A.C."/>
            <person name="Alcaraz J.-P."/>
            <person name="Cottet A."/>
            <person name="Casacuberta E."/>
            <person name="Monfort A."/>
            <person name="Argiriou A."/>
            <person name="Flores M."/>
            <person name="Liguori R."/>
            <person name="Vitale D."/>
            <person name="Mannhaupt G."/>
            <person name="Haase D."/>
            <person name="Schoof H."/>
            <person name="Rudd S."/>
            <person name="Zaccaria P."/>
            <person name="Mewes H.-W."/>
            <person name="Mayer K.F.X."/>
            <person name="Kaul S."/>
            <person name="Town C.D."/>
            <person name="Koo H.L."/>
            <person name="Tallon L.J."/>
            <person name="Jenkins J."/>
            <person name="Rooney T."/>
            <person name="Rizzo M."/>
            <person name="Walts A."/>
            <person name="Utterback T."/>
            <person name="Fujii C.Y."/>
            <person name="Shea T.P."/>
            <person name="Creasy T.H."/>
            <person name="Haas B."/>
            <person name="Maiti R."/>
            <person name="Wu D."/>
            <person name="Peterson J."/>
            <person name="Van Aken S."/>
            <person name="Pai G."/>
            <person name="Militscher J."/>
            <person name="Sellers P."/>
            <person name="Gill J.E."/>
            <person name="Feldblyum T.V."/>
            <person name="Preuss D."/>
            <person name="Lin X."/>
            <person name="Nierman W.C."/>
            <person name="Salzberg S.L."/>
            <person name="White O."/>
            <person name="Venter J.C."/>
            <person name="Fraser C.M."/>
            <person name="Kaneko T."/>
            <person name="Nakamura Y."/>
            <person name="Sato S."/>
            <person name="Kato T."/>
            <person name="Asamizu E."/>
            <person name="Sasamoto S."/>
            <person name="Kimura T."/>
            <person name="Idesawa K."/>
            <person name="Kawashima K."/>
            <person name="Kishida Y."/>
            <person name="Kiyokawa C."/>
            <person name="Kohara M."/>
            <person name="Matsumoto M."/>
            <person name="Matsuno A."/>
            <person name="Muraki A."/>
            <person name="Nakayama S."/>
            <person name="Nakazaki N."/>
            <person name="Shinpo S."/>
            <person name="Takeuchi C."/>
            <person name="Wada T."/>
            <person name="Watanabe A."/>
            <person name="Yamada M."/>
            <person name="Yasuda M."/>
            <person name="Tabata S."/>
        </authorList>
    </citation>
    <scope>NUCLEOTIDE SEQUENCE [LARGE SCALE GENOMIC DNA]</scope>
    <source>
        <strain>cv. Columbia</strain>
    </source>
</reference>
<reference key="2">
    <citation type="journal article" date="2017" name="Plant J.">
        <title>Araport11: a complete reannotation of the Arabidopsis thaliana reference genome.</title>
        <authorList>
            <person name="Cheng C.Y."/>
            <person name="Krishnakumar V."/>
            <person name="Chan A.P."/>
            <person name="Thibaud-Nissen F."/>
            <person name="Schobel S."/>
            <person name="Town C.D."/>
        </authorList>
    </citation>
    <scope>GENOME REANNOTATION</scope>
    <source>
        <strain>cv. Columbia</strain>
    </source>
</reference>
<reference key="3">
    <citation type="submission" date="2006-07" db="EMBL/GenBank/DDBJ databases">
        <title>Large-scale analysis of RIKEN Arabidopsis full-length (RAFL) cDNAs.</title>
        <authorList>
            <person name="Totoki Y."/>
            <person name="Seki M."/>
            <person name="Ishida J."/>
            <person name="Nakajima M."/>
            <person name="Enju A."/>
            <person name="Kamiya A."/>
            <person name="Narusaka M."/>
            <person name="Shin-i T."/>
            <person name="Nakagawa M."/>
            <person name="Sakamoto N."/>
            <person name="Oishi K."/>
            <person name="Kohara Y."/>
            <person name="Kobayashi M."/>
            <person name="Toyoda A."/>
            <person name="Sakaki Y."/>
            <person name="Sakurai T."/>
            <person name="Iida K."/>
            <person name="Akiyama K."/>
            <person name="Satou M."/>
            <person name="Toyoda T."/>
            <person name="Konagaya A."/>
            <person name="Carninci P."/>
            <person name="Kawai J."/>
            <person name="Hayashizaki Y."/>
            <person name="Shinozaki K."/>
        </authorList>
    </citation>
    <scope>NUCLEOTIDE SEQUENCE [LARGE SCALE MRNA]</scope>
    <source>
        <strain>cv. Columbia</strain>
    </source>
</reference>
<reference key="4">
    <citation type="journal article" date="2009" name="J. Proteomics">
        <title>Phosphoproteomic analysis of nuclei-enriched fractions from Arabidopsis thaliana.</title>
        <authorList>
            <person name="Jones A.M.E."/>
            <person name="MacLean D."/>
            <person name="Studholme D.J."/>
            <person name="Serna-Sanz A."/>
            <person name="Andreasson E."/>
            <person name="Rathjen J.P."/>
            <person name="Peck S.C."/>
        </authorList>
    </citation>
    <scope>IDENTIFICATION BY MASS SPECTROMETRY [LARGE SCALE ANALYSIS]</scope>
    <source>
        <strain>cv. Columbia</strain>
    </source>
</reference>
<reference key="5">
    <citation type="journal article" date="2012" name="Development">
        <title>OCTOPUS, a polarly localised membrane-associated protein, regulates phloem differentiation entry in Arabidopsis thaliana.</title>
        <authorList>
            <person name="Truernit E."/>
            <person name="Bauby H."/>
            <person name="Belcram K."/>
            <person name="Barthelemy J."/>
            <person name="Palauqui J.C."/>
        </authorList>
    </citation>
    <scope>FUNCTION</scope>
    <scope>SUBCELLULAR LOCATION</scope>
    <scope>DEVELOPMENTAL STAGE</scope>
    <scope>TISSUE SPECIFICITY</scope>
    <source>
        <strain>cv. Columbia</strain>
        <strain>cv. Wassilewskija</strain>
    </source>
</reference>
<reference key="6">
    <citation type="journal article" date="2014" name="Proc. Natl. Acad. Sci. U.S.A.">
        <title>Molecular genetic framework for protophloem formation.</title>
        <authorList>
            <person name="Rodriguez-Villalon A."/>
            <person name="Gujas B."/>
            <person name="Kang Y.H."/>
            <person name="Breda A.S."/>
            <person name="Cattaneo P."/>
            <person name="Depuydt S."/>
            <person name="Hardtke C.S."/>
        </authorList>
    </citation>
    <scope>FUNCTION</scope>
    <scope>DISRUPTION PHENOTYPE</scope>
    <scope>MUTAGENESIS OF GLU-319</scope>
    <scope>TISSUE SPECIFICITY</scope>
    <source>
        <strain>cv. Columbia</strain>
    </source>
</reference>
<reference key="7">
    <citation type="journal article" date="2014" name="Plant Physiol.">
        <title>The VASCULATURE COMPLEXITY AND CONNECTIVITY gene encodes a plant-specific protein required for embryo provasculature development.</title>
        <authorList>
            <person name="Roschzttardtz H."/>
            <person name="Paez-Valencia J."/>
            <person name="Dittakavi T."/>
            <person name="Jali S."/>
            <person name="Reyes F.C."/>
            <person name="Baisa G."/>
            <person name="Anne P."/>
            <person name="Gissot L."/>
            <person name="Palauqui J.-C."/>
            <person name="Masson P.H."/>
            <person name="Bednarek S.Y."/>
            <person name="Otegui M.S."/>
        </authorList>
    </citation>
    <scope>FUNCTION</scope>
    <scope>DISRUPTION PHENOTYPE</scope>
    <scope>INTERACTION WITH VCC</scope>
    <source>
        <strain>cv. Columbia</strain>
    </source>
</reference>
<reference key="8">
    <citation type="journal article" date="2017" name="Proc. Natl. Acad. Sci. U.S.A.">
        <title>Phosphosite charge rather than shootward localization determines OCTOPUS activity in root protophloem.</title>
        <authorList>
            <person name="Breda A.S."/>
            <person name="Hazak O."/>
            <person name="Hardtke C.S."/>
        </authorList>
    </citation>
    <scope>FUNCTION</scope>
    <scope>DISRUPTION PHENOTYPE</scope>
    <scope>MUTAGENESIS OF SER-318 AND GLU-319</scope>
    <scope>SUBCELLULAR LOCATION</scope>
    <scope>PHOSPHORYLATION AT SER-318</scope>
    <scope>IDENTIFICATION BY MASS SPECTROMETRY</scope>
    <source>
        <strain>cv. Columbia</strain>
    </source>
</reference>
<keyword id="KW-1003">Cell membrane</keyword>
<keyword id="KW-0175">Coiled coil</keyword>
<keyword id="KW-0963">Cytoplasm</keyword>
<keyword id="KW-0217">Developmental protein</keyword>
<keyword id="KW-0221">Differentiation</keyword>
<keyword id="KW-0472">Membrane</keyword>
<keyword id="KW-0597">Phosphoprotein</keyword>
<keyword id="KW-1185">Reference proteome</keyword>
<proteinExistence type="evidence at protein level"/>
<gene>
    <name evidence="7" type="primary">OPS</name>
    <name evidence="9" type="ordered locus">At3g09070</name>
    <name evidence="10" type="ORF">MZB10.10</name>
</gene>